<comment type="function">
    <text evidence="2">Transcription factor which function may be to trigger the increase of adhesion at stationary phase, possibly by counteracting or replacing cbf11 at the respective promoters. May also play a cbf11-antagonistic role in the regulation of a number of other important processes such as extracellular material production, colony morphogenesis, ploidy maintenance, or meiosis.</text>
</comment>
<comment type="subcellular location">
    <subcellularLocation>
        <location evidence="2">Nucleus</location>
    </subcellularLocation>
</comment>
<comment type="induction">
    <text evidence="2">Expression increases as the cells enter the stationary phase, with a statistically significant peak at the late stationary phase. A similar increase in the mRNA levels is found in the sporulating cells.</text>
</comment>
<comment type="similarity">
    <text evidence="3">Belongs to the Su(H) family.</text>
</comment>
<evidence type="ECO:0000256" key="1">
    <source>
        <dbReference type="SAM" id="MobiDB-lite"/>
    </source>
</evidence>
<evidence type="ECO:0000269" key="2">
    <source>
    </source>
</evidence>
<evidence type="ECO:0000305" key="3"/>
<protein>
    <recommendedName>
        <fullName>Transcription factor cbf12</fullName>
    </recommendedName>
    <alternativeName>
        <fullName>C-promoter element-binding factor-like protein 12</fullName>
    </alternativeName>
</protein>
<keyword id="KW-0130">Cell adhesion</keyword>
<keyword id="KW-0238">DNA-binding</keyword>
<keyword id="KW-0539">Nucleus</keyword>
<keyword id="KW-1185">Reference proteome</keyword>
<keyword id="KW-0804">Transcription</keyword>
<keyword id="KW-0805">Transcription regulation</keyword>
<proteinExistence type="evidence at transcript level"/>
<reference key="1">
    <citation type="journal article" date="2002" name="Nature">
        <title>The genome sequence of Schizosaccharomyces pombe.</title>
        <authorList>
            <person name="Wood V."/>
            <person name="Gwilliam R."/>
            <person name="Rajandream M.A."/>
            <person name="Lyne M.H."/>
            <person name="Lyne R."/>
            <person name="Stewart A."/>
            <person name="Sgouros J.G."/>
            <person name="Peat N."/>
            <person name="Hayles J."/>
            <person name="Baker S.G."/>
            <person name="Basham D."/>
            <person name="Bowman S."/>
            <person name="Brooks K."/>
            <person name="Brown D."/>
            <person name="Brown S."/>
            <person name="Chillingworth T."/>
            <person name="Churcher C.M."/>
            <person name="Collins M."/>
            <person name="Connor R."/>
            <person name="Cronin A."/>
            <person name="Davis P."/>
            <person name="Feltwell T."/>
            <person name="Fraser A."/>
            <person name="Gentles S."/>
            <person name="Goble A."/>
            <person name="Hamlin N."/>
            <person name="Harris D.E."/>
            <person name="Hidalgo J."/>
            <person name="Hodgson G."/>
            <person name="Holroyd S."/>
            <person name="Hornsby T."/>
            <person name="Howarth S."/>
            <person name="Huckle E.J."/>
            <person name="Hunt S."/>
            <person name="Jagels K."/>
            <person name="James K.D."/>
            <person name="Jones L."/>
            <person name="Jones M."/>
            <person name="Leather S."/>
            <person name="McDonald S."/>
            <person name="McLean J."/>
            <person name="Mooney P."/>
            <person name="Moule S."/>
            <person name="Mungall K.L."/>
            <person name="Murphy L.D."/>
            <person name="Niblett D."/>
            <person name="Odell C."/>
            <person name="Oliver K."/>
            <person name="O'Neil S."/>
            <person name="Pearson D."/>
            <person name="Quail M.A."/>
            <person name="Rabbinowitsch E."/>
            <person name="Rutherford K.M."/>
            <person name="Rutter S."/>
            <person name="Saunders D."/>
            <person name="Seeger K."/>
            <person name="Sharp S."/>
            <person name="Skelton J."/>
            <person name="Simmonds M.N."/>
            <person name="Squares R."/>
            <person name="Squares S."/>
            <person name="Stevens K."/>
            <person name="Taylor K."/>
            <person name="Taylor R.G."/>
            <person name="Tivey A."/>
            <person name="Walsh S.V."/>
            <person name="Warren T."/>
            <person name="Whitehead S."/>
            <person name="Woodward J.R."/>
            <person name="Volckaert G."/>
            <person name="Aert R."/>
            <person name="Robben J."/>
            <person name="Grymonprez B."/>
            <person name="Weltjens I."/>
            <person name="Vanstreels E."/>
            <person name="Rieger M."/>
            <person name="Schaefer M."/>
            <person name="Mueller-Auer S."/>
            <person name="Gabel C."/>
            <person name="Fuchs M."/>
            <person name="Duesterhoeft A."/>
            <person name="Fritzc C."/>
            <person name="Holzer E."/>
            <person name="Moestl D."/>
            <person name="Hilbert H."/>
            <person name="Borzym K."/>
            <person name="Langer I."/>
            <person name="Beck A."/>
            <person name="Lehrach H."/>
            <person name="Reinhardt R."/>
            <person name="Pohl T.M."/>
            <person name="Eger P."/>
            <person name="Zimmermann W."/>
            <person name="Wedler H."/>
            <person name="Wambutt R."/>
            <person name="Purnelle B."/>
            <person name="Goffeau A."/>
            <person name="Cadieu E."/>
            <person name="Dreano S."/>
            <person name="Gloux S."/>
            <person name="Lelaure V."/>
            <person name="Mottier S."/>
            <person name="Galibert F."/>
            <person name="Aves S.J."/>
            <person name="Xiang Z."/>
            <person name="Hunt C."/>
            <person name="Moore K."/>
            <person name="Hurst S.M."/>
            <person name="Lucas M."/>
            <person name="Rochet M."/>
            <person name="Gaillardin C."/>
            <person name="Tallada V.A."/>
            <person name="Garzon A."/>
            <person name="Thode G."/>
            <person name="Daga R.R."/>
            <person name="Cruzado L."/>
            <person name="Jimenez J."/>
            <person name="Sanchez M."/>
            <person name="del Rey F."/>
            <person name="Benito J."/>
            <person name="Dominguez A."/>
            <person name="Revuelta J.L."/>
            <person name="Moreno S."/>
            <person name="Armstrong J."/>
            <person name="Forsburg S.L."/>
            <person name="Cerutti L."/>
            <person name="Lowe T."/>
            <person name="McCombie W.R."/>
            <person name="Paulsen I."/>
            <person name="Potashkin J."/>
            <person name="Shpakovski G.V."/>
            <person name="Ussery D."/>
            <person name="Barrell B.G."/>
            <person name="Nurse P."/>
        </authorList>
    </citation>
    <scope>NUCLEOTIDE SEQUENCE [LARGE SCALE GENOMIC DNA]</scope>
    <source>
        <strain>972 / ATCC 24843</strain>
    </source>
</reference>
<reference key="2">
    <citation type="journal article" date="2009" name="Exp. Cell Res.">
        <title>Cbf11 and Cbf12, the fission yeast CSL proteins, play opposing roles in cell adhesion and coordination of cell and nuclear division.</title>
        <authorList>
            <person name="Prevorovsky M."/>
            <person name="Grousl T."/>
            <person name="Stanurova J."/>
            <person name="Rynes J."/>
            <person name="Nellen W."/>
            <person name="Puta F."/>
            <person name="Folk P."/>
        </authorList>
    </citation>
    <scope>INDUCTION</scope>
    <scope>SUBCELLULAR LOCATION</scope>
    <scope>FUNCTION</scope>
</reference>
<dbReference type="EMBL" id="CU329672">
    <property type="protein sequence ID" value="CAA20882.1"/>
    <property type="molecule type" value="Genomic_DNA"/>
</dbReference>
<dbReference type="PIR" id="T40873">
    <property type="entry name" value="T40873"/>
</dbReference>
<dbReference type="RefSeq" id="NP_588358.1">
    <property type="nucleotide sequence ID" value="NM_001023349.2"/>
</dbReference>
<dbReference type="SMR" id="O74412"/>
<dbReference type="BioGRID" id="275691">
    <property type="interactions" value="11"/>
</dbReference>
<dbReference type="STRING" id="284812.O74412"/>
<dbReference type="iPTMnet" id="O74412"/>
<dbReference type="PaxDb" id="4896-SPCC1223.13.1"/>
<dbReference type="EnsemblFungi" id="SPCC1223.13.1">
    <property type="protein sequence ID" value="SPCC1223.13.1:pep"/>
    <property type="gene ID" value="SPCC1223.13"/>
</dbReference>
<dbReference type="GeneID" id="2539119"/>
<dbReference type="KEGG" id="spo:2539119"/>
<dbReference type="PomBase" id="SPCC1223.13">
    <property type="gene designation" value="cbf12"/>
</dbReference>
<dbReference type="VEuPathDB" id="FungiDB:SPCC1223.13"/>
<dbReference type="eggNOG" id="KOG3743">
    <property type="taxonomic scope" value="Eukaryota"/>
</dbReference>
<dbReference type="HOGENOM" id="CLU_307202_0_0_1"/>
<dbReference type="InParanoid" id="O74412"/>
<dbReference type="OMA" id="WDITIAV"/>
<dbReference type="PhylomeDB" id="O74412"/>
<dbReference type="PRO" id="PR:O74412"/>
<dbReference type="Proteomes" id="UP000002485">
    <property type="component" value="Chromosome III"/>
</dbReference>
<dbReference type="GO" id="GO:0000785">
    <property type="term" value="C:chromatin"/>
    <property type="evidence" value="ECO:0000314"/>
    <property type="project" value="PomBase"/>
</dbReference>
<dbReference type="GO" id="GO:0005634">
    <property type="term" value="C:nucleus"/>
    <property type="evidence" value="ECO:0000314"/>
    <property type="project" value="PomBase"/>
</dbReference>
<dbReference type="GO" id="GO:0001228">
    <property type="term" value="F:DNA-binding transcription activator activity, RNA polymerase II-specific"/>
    <property type="evidence" value="ECO:0000315"/>
    <property type="project" value="PomBase"/>
</dbReference>
<dbReference type="GO" id="GO:0000981">
    <property type="term" value="F:DNA-binding transcription factor activity, RNA polymerase II-specific"/>
    <property type="evidence" value="ECO:0000318"/>
    <property type="project" value="GO_Central"/>
</dbReference>
<dbReference type="GO" id="GO:0000978">
    <property type="term" value="F:RNA polymerase II cis-regulatory region sequence-specific DNA binding"/>
    <property type="evidence" value="ECO:0000314"/>
    <property type="project" value="PomBase"/>
</dbReference>
<dbReference type="GO" id="GO:0007155">
    <property type="term" value="P:cell adhesion"/>
    <property type="evidence" value="ECO:0007669"/>
    <property type="project" value="UniProtKB-KW"/>
</dbReference>
<dbReference type="GO" id="GO:1900735">
    <property type="term" value="P:positive regulation of flocculation"/>
    <property type="evidence" value="ECO:0000315"/>
    <property type="project" value="PomBase"/>
</dbReference>
<dbReference type="GO" id="GO:0045944">
    <property type="term" value="P:positive regulation of transcription by RNA polymerase II"/>
    <property type="evidence" value="ECO:0000314"/>
    <property type="project" value="PomBase"/>
</dbReference>
<dbReference type="Gene3D" id="2.80.10.50">
    <property type="match status" value="1"/>
</dbReference>
<dbReference type="InterPro" id="IPR015350">
    <property type="entry name" value="Beta-trefoil_DNA-bd_dom"/>
</dbReference>
<dbReference type="InterPro" id="IPR036358">
    <property type="entry name" value="BTD_sf"/>
</dbReference>
<dbReference type="InterPro" id="IPR040159">
    <property type="entry name" value="CLS_fam"/>
</dbReference>
<dbReference type="InterPro" id="IPR008967">
    <property type="entry name" value="p53-like_TF_DNA-bd_sf"/>
</dbReference>
<dbReference type="InterPro" id="IPR015351">
    <property type="entry name" value="RBP-J/Cbf11/Cbf12_DNA-bd"/>
</dbReference>
<dbReference type="PANTHER" id="PTHR10665">
    <property type="entry name" value="RECOMBINING BINDING PROTEIN SUPPRESSOR OF HAIRLESS"/>
    <property type="match status" value="1"/>
</dbReference>
<dbReference type="Pfam" id="PF09270">
    <property type="entry name" value="BTD"/>
    <property type="match status" value="1"/>
</dbReference>
<dbReference type="Pfam" id="PF09271">
    <property type="entry name" value="LAG1-DNAbind"/>
    <property type="match status" value="1"/>
</dbReference>
<dbReference type="SMART" id="SM01268">
    <property type="entry name" value="BTD"/>
    <property type="match status" value="1"/>
</dbReference>
<dbReference type="SMART" id="SM01267">
    <property type="entry name" value="LAG1_DNAbind"/>
    <property type="match status" value="1"/>
</dbReference>
<dbReference type="SUPFAM" id="SSF110217">
    <property type="entry name" value="DNA-binding protein LAG-1 (CSL)"/>
    <property type="match status" value="1"/>
</dbReference>
<dbReference type="SUPFAM" id="SSF49417">
    <property type="entry name" value="p53-like transcription factors"/>
    <property type="match status" value="1"/>
</dbReference>
<accession>O74412</accession>
<feature type="chain" id="PRO_0000363404" description="Transcription factor cbf12">
    <location>
        <begin position="1"/>
        <end position="963"/>
    </location>
</feature>
<feature type="region of interest" description="Disordered" evidence="1">
    <location>
        <begin position="130"/>
        <end position="207"/>
    </location>
</feature>
<feature type="region of interest" description="Disordered" evidence="1">
    <location>
        <begin position="248"/>
        <end position="289"/>
    </location>
</feature>
<feature type="compositionally biased region" description="Polar residues" evidence="1">
    <location>
        <begin position="143"/>
        <end position="207"/>
    </location>
</feature>
<feature type="compositionally biased region" description="Polar residues" evidence="1">
    <location>
        <begin position="249"/>
        <end position="289"/>
    </location>
</feature>
<sequence>MSPNVQKRPSSEDIKTQEFYDSTRNIRRVATAIGSINANLESPQLYSLAKSTSLQEPVRIYGDSVSPAISSSKAHSTSSVSPYYSEKNESQALNADGTAFANPSFHSFGLPQEDSQDNTQTYSTPYTTMNPSNEMHPYPPATFENNYSVLPDHSSQPNAYSFTGSNILPTQSPSLNQMQDYQNLQQNGSSNTTIPSFSSQHDLSQGLTHQPVPNHDEYAFSYPYELQRKPLIPAHPVPSFRPTSALKVNMNSNVPSSDSVRNSSPNQYYASTSKQSIPSQSQNLQPPQKASVLGTVNNYRQYQNSFISLNDYQAAQSNISSPSSRFPTPYSPSVPFGTYQEKEKSYSQDHAELSYYQQSPSMMPPYDRSSVYFQQPLSRTDVPNQSFQQYPTTVDGGSMIPNLYPTSAEQMGLYPQDSQNKDTYPKSLVNRPSSAVCEPARNDSIPMMVYSQPVTIEQRIQYVLSNCHCLSAFYLCMPSLCQKSYGTERRYLCPPIVLYLLGTTWLNNVTDNLKISAQTLEDKDNPKFAKNIFYYNADGALISPETDIAKSTYQLTNYNENTNFDSFPVWGNALLKTIYYTGQGKNDGFGRSTFLQLSVQSKTKYFKLENLRLGVISKPSQKRALMKVSDMSIRHGDCVCLFNRYRAQHNNALFLGTSNVQRAISKVSLNMKYNSNYFPTTDAPNDAENEGAGLAMANNLWEPFYIFSVDELNKGNNSNPSDSRSKVLCSNMVIILVSKITGVQSPPLILKKHDNWKVSLSSRAPSEAINCLSKLAFQCHETKRFLYIDEKQSSEISFTSGELEYSDPNDPTKATHSVLPWSAMWSIISTQSVRTMFYNEPIHQNAFHVVPSMPFVKFIRLDENSMFHIYGTGFANDVQIWMAYTRCEVKSINAFKPDTTLPPDIISDSRFSSRVYACTANLIELICEIPVCMFEPTVELSPILLFQYETLFHSGYKWPLESH</sequence>
<name>CBF12_SCHPO</name>
<gene>
    <name type="primary">cbf12</name>
    <name type="ORF">SPCC1223.13</name>
</gene>
<organism>
    <name type="scientific">Schizosaccharomyces pombe (strain 972 / ATCC 24843)</name>
    <name type="common">Fission yeast</name>
    <dbReference type="NCBI Taxonomy" id="284812"/>
    <lineage>
        <taxon>Eukaryota</taxon>
        <taxon>Fungi</taxon>
        <taxon>Dikarya</taxon>
        <taxon>Ascomycota</taxon>
        <taxon>Taphrinomycotina</taxon>
        <taxon>Schizosaccharomycetes</taxon>
        <taxon>Schizosaccharomycetales</taxon>
        <taxon>Schizosaccharomycetaceae</taxon>
        <taxon>Schizosaccharomyces</taxon>
    </lineage>
</organism>